<feature type="chain" id="PRO_0000196124" description="Endocuticle structural glycoprotein SgAbd-8">
    <location>
        <begin position="1"/>
        <end position="139"/>
    </location>
</feature>
<feature type="domain" description="Chitin-binding type R&amp;R" evidence="1">
    <location>
        <begin position="29"/>
        <end position="99"/>
    </location>
</feature>
<feature type="region of interest" description="Disordered" evidence="2">
    <location>
        <begin position="111"/>
        <end position="139"/>
    </location>
</feature>
<feature type="compositionally biased region" description="Pro residues" evidence="2">
    <location>
        <begin position="129"/>
        <end position="139"/>
    </location>
</feature>
<feature type="modified residue" description="Pyrrolidone carboxylic acid" evidence="3">
    <location>
        <position position="1"/>
    </location>
</feature>
<feature type="glycosylation site" description="O-linked (HexNAc...) threonine">
    <location>
        <position position="14"/>
    </location>
</feature>
<feature type="glycosylation site" description="O-linked (HexNAc...) serine">
    <location>
        <position position="15"/>
    </location>
</feature>
<feature type="glycosylation site" description="O-linked (HexNAc...) threonine">
    <location>
        <position position="97"/>
    </location>
</feature>
<accession>Q7M4F2</accession>
<name>CUD8_SCHGR</name>
<reference key="1">
    <citation type="journal article" date="1998" name="Insect Biochem. Mol. Biol.">
        <title>Amino acid sequence studies on endocuticular proteins from the desert locust, Schistocerca gregaria.</title>
        <authorList>
            <person name="Andersen S.O."/>
        </authorList>
    </citation>
    <scope>PROTEIN SEQUENCE</scope>
    <scope>PYROGLUTAMATE FORMATION AT GLN-1</scope>
    <scope>POST-TRANSLATIONAL MODIFICATIONS</scope>
    <source>
        <strain>Albino</strain>
        <tissue>Cuticle</tissue>
    </source>
</reference>
<proteinExistence type="evidence at protein level"/>
<keyword id="KW-0193">Cuticle</keyword>
<keyword id="KW-0903">Direct protein sequencing</keyword>
<keyword id="KW-0325">Glycoprotein</keyword>
<keyword id="KW-0873">Pyrrolidone carboxylic acid</keyword>
<evidence type="ECO:0000255" key="1">
    <source>
        <dbReference type="PROSITE-ProRule" id="PRU00497"/>
    </source>
</evidence>
<evidence type="ECO:0000256" key="2">
    <source>
        <dbReference type="SAM" id="MobiDB-lite"/>
    </source>
</evidence>
<evidence type="ECO:0000269" key="3">
    <source>
    </source>
</evidence>
<dbReference type="PIR" id="S78096">
    <property type="entry name" value="S78096"/>
</dbReference>
<dbReference type="EnsemblMetazoa" id="XM_049982737.1">
    <property type="protein sequence ID" value="XP_049838694.1"/>
    <property type="gene ID" value="LOC126284089"/>
</dbReference>
<dbReference type="OrthoDB" id="6372059at2759"/>
<dbReference type="GO" id="GO:0062129">
    <property type="term" value="C:chitin-based extracellular matrix"/>
    <property type="evidence" value="ECO:0007669"/>
    <property type="project" value="TreeGrafter"/>
</dbReference>
<dbReference type="GO" id="GO:0008010">
    <property type="term" value="F:structural constituent of chitin-based larval cuticle"/>
    <property type="evidence" value="ECO:0007669"/>
    <property type="project" value="TreeGrafter"/>
</dbReference>
<dbReference type="InterPro" id="IPR031311">
    <property type="entry name" value="CHIT_BIND_RR_consensus"/>
</dbReference>
<dbReference type="InterPro" id="IPR050468">
    <property type="entry name" value="Cuticle_Struct_Prot"/>
</dbReference>
<dbReference type="InterPro" id="IPR000618">
    <property type="entry name" value="Insect_cuticle"/>
</dbReference>
<dbReference type="PANTHER" id="PTHR10380">
    <property type="entry name" value="CUTICLE PROTEIN"/>
    <property type="match status" value="1"/>
</dbReference>
<dbReference type="PANTHER" id="PTHR10380:SF241">
    <property type="entry name" value="CUTICULAR PROTEIN 47EG-RELATED"/>
    <property type="match status" value="1"/>
</dbReference>
<dbReference type="Pfam" id="PF00379">
    <property type="entry name" value="Chitin_bind_4"/>
    <property type="match status" value="1"/>
</dbReference>
<dbReference type="PRINTS" id="PR00947">
    <property type="entry name" value="CUTICLE"/>
</dbReference>
<dbReference type="PROSITE" id="PS00233">
    <property type="entry name" value="CHIT_BIND_RR_1"/>
    <property type="match status" value="1"/>
</dbReference>
<dbReference type="PROSITE" id="PS51155">
    <property type="entry name" value="CHIT_BIND_RR_2"/>
    <property type="match status" value="1"/>
</dbReference>
<comment type="function">
    <text>Component of the abdominal endocuticle.</text>
</comment>
<organism>
    <name type="scientific">Schistocerca gregaria</name>
    <name type="common">Desert locust</name>
    <name type="synonym">Gryllus gregarius</name>
    <dbReference type="NCBI Taxonomy" id="7010"/>
    <lineage>
        <taxon>Eukaryota</taxon>
        <taxon>Metazoa</taxon>
        <taxon>Ecdysozoa</taxon>
        <taxon>Arthropoda</taxon>
        <taxon>Hexapoda</taxon>
        <taxon>Insecta</taxon>
        <taxon>Pterygota</taxon>
        <taxon>Neoptera</taxon>
        <taxon>Polyneoptera</taxon>
        <taxon>Orthoptera</taxon>
        <taxon>Caelifera</taxon>
        <taxon>Acrididea</taxon>
        <taxon>Acridomorpha</taxon>
        <taxon>Acridoidea</taxon>
        <taxon>Acrididae</taxon>
        <taxon>Cyrtacanthacridinae</taxon>
        <taxon>Schistocerca</taxon>
    </lineage>
</organism>
<sequence length="139" mass="14890">QFRPQPQPSYSGNTSPIPIIRYSNEISPDGSYAWSYETGNGIAADESGALENPGQKDLEAMRAQGSFSYTAPDGSPISVRYVADRDGFHPEGAHLPTPPPIPPAIQRALDFIASQPQQPGNNGGGQFPRPQPFPRPGAF</sequence>
<protein>
    <recommendedName>
        <fullName>Endocuticle structural glycoprotein SgAbd-8</fullName>
    </recommendedName>
</protein>